<proteinExistence type="inferred from homology"/>
<evidence type="ECO:0000255" key="1">
    <source>
        <dbReference type="HAMAP-Rule" id="MF_00360"/>
    </source>
</evidence>
<evidence type="ECO:0000256" key="2">
    <source>
        <dbReference type="SAM" id="MobiDB-lite"/>
    </source>
</evidence>
<evidence type="ECO:0000305" key="3"/>
<dbReference type="EMBL" id="CP000097">
    <property type="protein sequence ID" value="ABB27264.1"/>
    <property type="molecule type" value="Genomic_DNA"/>
</dbReference>
<dbReference type="RefSeq" id="WP_011361040.1">
    <property type="nucleotide sequence ID" value="NC_007513.1"/>
</dbReference>
<dbReference type="SMR" id="Q3AVM1"/>
<dbReference type="STRING" id="316279.Syncc9902_2306"/>
<dbReference type="KEGG" id="sye:Syncc9902_2306"/>
<dbReference type="eggNOG" id="COG0360">
    <property type="taxonomic scope" value="Bacteria"/>
</dbReference>
<dbReference type="HOGENOM" id="CLU_113441_4_2_3"/>
<dbReference type="OrthoDB" id="9812702at2"/>
<dbReference type="Proteomes" id="UP000002712">
    <property type="component" value="Chromosome"/>
</dbReference>
<dbReference type="GO" id="GO:0005737">
    <property type="term" value="C:cytoplasm"/>
    <property type="evidence" value="ECO:0007669"/>
    <property type="project" value="UniProtKB-ARBA"/>
</dbReference>
<dbReference type="GO" id="GO:1990904">
    <property type="term" value="C:ribonucleoprotein complex"/>
    <property type="evidence" value="ECO:0007669"/>
    <property type="project" value="UniProtKB-KW"/>
</dbReference>
<dbReference type="GO" id="GO:0005840">
    <property type="term" value="C:ribosome"/>
    <property type="evidence" value="ECO:0007669"/>
    <property type="project" value="UniProtKB-KW"/>
</dbReference>
<dbReference type="GO" id="GO:0070181">
    <property type="term" value="F:small ribosomal subunit rRNA binding"/>
    <property type="evidence" value="ECO:0007669"/>
    <property type="project" value="TreeGrafter"/>
</dbReference>
<dbReference type="GO" id="GO:0003735">
    <property type="term" value="F:structural constituent of ribosome"/>
    <property type="evidence" value="ECO:0007669"/>
    <property type="project" value="InterPro"/>
</dbReference>
<dbReference type="GO" id="GO:0006412">
    <property type="term" value="P:translation"/>
    <property type="evidence" value="ECO:0007669"/>
    <property type="project" value="UniProtKB-UniRule"/>
</dbReference>
<dbReference type="CDD" id="cd15487">
    <property type="entry name" value="bS6_chloro_cyano"/>
    <property type="match status" value="1"/>
</dbReference>
<dbReference type="Gene3D" id="3.30.70.60">
    <property type="match status" value="1"/>
</dbReference>
<dbReference type="HAMAP" id="MF_00360">
    <property type="entry name" value="Ribosomal_bS6"/>
    <property type="match status" value="1"/>
</dbReference>
<dbReference type="InterPro" id="IPR000529">
    <property type="entry name" value="Ribosomal_bS6"/>
</dbReference>
<dbReference type="InterPro" id="IPR020815">
    <property type="entry name" value="Ribosomal_bS6_CS"/>
</dbReference>
<dbReference type="InterPro" id="IPR035980">
    <property type="entry name" value="Ribosomal_bS6_sf"/>
</dbReference>
<dbReference type="InterPro" id="IPR020814">
    <property type="entry name" value="Ribosomal_S6_plastid/chlpt"/>
</dbReference>
<dbReference type="InterPro" id="IPR014717">
    <property type="entry name" value="Transl_elong_EF1B/ribsomal_bS6"/>
</dbReference>
<dbReference type="NCBIfam" id="TIGR00166">
    <property type="entry name" value="S6"/>
    <property type="match status" value="1"/>
</dbReference>
<dbReference type="PANTHER" id="PTHR21011">
    <property type="entry name" value="MITOCHONDRIAL 28S RIBOSOMAL PROTEIN S6"/>
    <property type="match status" value="1"/>
</dbReference>
<dbReference type="PANTHER" id="PTHR21011:SF1">
    <property type="entry name" value="SMALL RIBOSOMAL SUBUNIT PROTEIN BS6M"/>
    <property type="match status" value="1"/>
</dbReference>
<dbReference type="Pfam" id="PF01250">
    <property type="entry name" value="Ribosomal_S6"/>
    <property type="match status" value="1"/>
</dbReference>
<dbReference type="SUPFAM" id="SSF54995">
    <property type="entry name" value="Ribosomal protein S6"/>
    <property type="match status" value="1"/>
</dbReference>
<dbReference type="PROSITE" id="PS01048">
    <property type="entry name" value="RIBOSOMAL_S6"/>
    <property type="match status" value="1"/>
</dbReference>
<organism>
    <name type="scientific">Synechococcus sp. (strain CC9902)</name>
    <dbReference type="NCBI Taxonomy" id="316279"/>
    <lineage>
        <taxon>Bacteria</taxon>
        <taxon>Bacillati</taxon>
        <taxon>Cyanobacteriota</taxon>
        <taxon>Cyanophyceae</taxon>
        <taxon>Synechococcales</taxon>
        <taxon>Synechococcaceae</taxon>
        <taxon>Synechococcus</taxon>
    </lineage>
</organism>
<accession>Q3AVM1</accession>
<keyword id="KW-1185">Reference proteome</keyword>
<keyword id="KW-0687">Ribonucleoprotein</keyword>
<keyword id="KW-0689">Ribosomal protein</keyword>
<keyword id="KW-0694">RNA-binding</keyword>
<keyword id="KW-0699">rRNA-binding</keyword>
<sequence>MTLDPYYETMYILRPDIPEEEVESHVTKYRDMIVEAGAEVLDNQMRGKRRLAYPIAKHKEGIYVQLSHNGDGQQVEVLEKAMRISEDVIRYLTVKQEGPLPAPRVVPGTEAPEPAQAAETPEPEAS</sequence>
<protein>
    <recommendedName>
        <fullName evidence="1">Small ribosomal subunit protein bS6</fullName>
    </recommendedName>
    <alternativeName>
        <fullName evidence="3">30S ribosomal protein S6</fullName>
    </alternativeName>
</protein>
<reference key="1">
    <citation type="submission" date="2005-08" db="EMBL/GenBank/DDBJ databases">
        <title>Complete sequence of Synechococcus sp. CC9902.</title>
        <authorList>
            <person name="Copeland A."/>
            <person name="Lucas S."/>
            <person name="Lapidus A."/>
            <person name="Barry K."/>
            <person name="Detter J.C."/>
            <person name="Glavina T."/>
            <person name="Hammon N."/>
            <person name="Israni S."/>
            <person name="Pitluck S."/>
            <person name="Martinez M."/>
            <person name="Schmutz J."/>
            <person name="Larimer F."/>
            <person name="Land M."/>
            <person name="Kyrpides N."/>
            <person name="Ivanova N."/>
            <person name="Richardson P."/>
        </authorList>
    </citation>
    <scope>NUCLEOTIDE SEQUENCE [LARGE SCALE GENOMIC DNA]</scope>
    <source>
        <strain>CC9902</strain>
    </source>
</reference>
<name>RS6_SYNS9</name>
<gene>
    <name evidence="1" type="primary">rpsF</name>
    <name evidence="1" type="synonym">rps6</name>
    <name type="ordered locus">Syncc9902_2306</name>
</gene>
<feature type="chain" id="PRO_1000005377" description="Small ribosomal subunit protein bS6">
    <location>
        <begin position="1"/>
        <end position="126"/>
    </location>
</feature>
<feature type="region of interest" description="Disordered" evidence="2">
    <location>
        <begin position="99"/>
        <end position="126"/>
    </location>
</feature>
<feature type="compositionally biased region" description="Low complexity" evidence="2">
    <location>
        <begin position="107"/>
        <end position="120"/>
    </location>
</feature>
<comment type="function">
    <text evidence="1">Binds together with bS18 to 16S ribosomal RNA.</text>
</comment>
<comment type="similarity">
    <text evidence="1">Belongs to the bacterial ribosomal protein bS6 family.</text>
</comment>